<name>RL18A_THEON</name>
<organism>
    <name type="scientific">Thermococcus onnurineus (strain NA1)</name>
    <dbReference type="NCBI Taxonomy" id="523850"/>
    <lineage>
        <taxon>Archaea</taxon>
        <taxon>Methanobacteriati</taxon>
        <taxon>Methanobacteriota</taxon>
        <taxon>Thermococci</taxon>
        <taxon>Thermococcales</taxon>
        <taxon>Thermococcaceae</taxon>
        <taxon>Thermococcus</taxon>
    </lineage>
</organism>
<gene>
    <name evidence="1" type="primary">rpl18a</name>
    <name evidence="1" type="synonym">rpl20e</name>
    <name evidence="1" type="synonym">rplX</name>
    <name type="ordered locus">TON_1106</name>
</gene>
<feature type="chain" id="PRO_1000114570" description="Large ribosomal subunit protein eL20">
    <location>
        <begin position="1"/>
        <end position="77"/>
    </location>
</feature>
<comment type="subunit">
    <text evidence="1">Part of the 50S ribosomal subunit. Binds 23S rRNA.</text>
</comment>
<comment type="similarity">
    <text evidence="1">Belongs to the eukaryotic ribosomal protein eL20 family.</text>
</comment>
<reference key="1">
    <citation type="journal article" date="2008" name="J. Bacteriol.">
        <title>The complete genome sequence of Thermococcus onnurineus NA1 reveals a mixed heterotrophic and carboxydotrophic metabolism.</title>
        <authorList>
            <person name="Lee H.S."/>
            <person name="Kang S.G."/>
            <person name="Bae S.S."/>
            <person name="Lim J.K."/>
            <person name="Cho Y."/>
            <person name="Kim Y.J."/>
            <person name="Jeon J.H."/>
            <person name="Cha S.-S."/>
            <person name="Kwon K.K."/>
            <person name="Kim H.-T."/>
            <person name="Park C.-J."/>
            <person name="Lee H.-W."/>
            <person name="Kim S.I."/>
            <person name="Chun J."/>
            <person name="Colwell R.R."/>
            <person name="Kim S.-J."/>
            <person name="Lee J.-H."/>
        </authorList>
    </citation>
    <scope>NUCLEOTIDE SEQUENCE [LARGE SCALE GENOMIC DNA]</scope>
    <source>
        <strain>NA1</strain>
    </source>
</reference>
<sequence>MEVKVFRVKGVFERLGKKQPFTKEYRALKQEHVKELVYSEIGSKHRVPRTKIWIESIEEIKPEEAEDPIVRKLSLEL</sequence>
<accession>B6YWY1</accession>
<evidence type="ECO:0000255" key="1">
    <source>
        <dbReference type="HAMAP-Rule" id="MF_00273"/>
    </source>
</evidence>
<evidence type="ECO:0000305" key="2"/>
<proteinExistence type="inferred from homology"/>
<protein>
    <recommendedName>
        <fullName evidence="1">Large ribosomal subunit protein eL20</fullName>
    </recommendedName>
    <alternativeName>
        <fullName evidence="2">50S ribosomal protein L18Ae</fullName>
    </alternativeName>
    <alternativeName>
        <fullName evidence="1">50S ribosomal protein L20e</fullName>
    </alternativeName>
    <alternativeName>
        <fullName evidence="1">50S ribosomal protein LX</fullName>
    </alternativeName>
</protein>
<dbReference type="EMBL" id="CP000855">
    <property type="protein sequence ID" value="ACJ16594.1"/>
    <property type="molecule type" value="Genomic_DNA"/>
</dbReference>
<dbReference type="RefSeq" id="WP_012572066.1">
    <property type="nucleotide sequence ID" value="NC_011529.1"/>
</dbReference>
<dbReference type="SMR" id="B6YWY1"/>
<dbReference type="STRING" id="523850.TON_1106"/>
<dbReference type="GeneID" id="7018128"/>
<dbReference type="KEGG" id="ton:TON_1106"/>
<dbReference type="PATRIC" id="fig|523850.10.peg.1114"/>
<dbReference type="eggNOG" id="arCOG04175">
    <property type="taxonomic scope" value="Archaea"/>
</dbReference>
<dbReference type="HOGENOM" id="CLU_177460_0_1_2"/>
<dbReference type="OrthoDB" id="191241at2157"/>
<dbReference type="Proteomes" id="UP000002727">
    <property type="component" value="Chromosome"/>
</dbReference>
<dbReference type="GO" id="GO:1990904">
    <property type="term" value="C:ribonucleoprotein complex"/>
    <property type="evidence" value="ECO:0007669"/>
    <property type="project" value="UniProtKB-KW"/>
</dbReference>
<dbReference type="GO" id="GO:0005840">
    <property type="term" value="C:ribosome"/>
    <property type="evidence" value="ECO:0007669"/>
    <property type="project" value="UniProtKB-KW"/>
</dbReference>
<dbReference type="GO" id="GO:0070180">
    <property type="term" value="F:large ribosomal subunit rRNA binding"/>
    <property type="evidence" value="ECO:0007669"/>
    <property type="project" value="UniProtKB-UniRule"/>
</dbReference>
<dbReference type="GO" id="GO:0003735">
    <property type="term" value="F:structural constituent of ribosome"/>
    <property type="evidence" value="ECO:0007669"/>
    <property type="project" value="InterPro"/>
</dbReference>
<dbReference type="GO" id="GO:0006412">
    <property type="term" value="P:translation"/>
    <property type="evidence" value="ECO:0007669"/>
    <property type="project" value="UniProtKB-UniRule"/>
</dbReference>
<dbReference type="Gene3D" id="3.10.20.10">
    <property type="match status" value="1"/>
</dbReference>
<dbReference type="HAMAP" id="MF_00273">
    <property type="entry name" value="Ribosomal_eL20"/>
    <property type="match status" value="1"/>
</dbReference>
<dbReference type="InterPro" id="IPR028877">
    <property type="entry name" value="Ribosomal_eL20"/>
</dbReference>
<dbReference type="InterPro" id="IPR023573">
    <property type="entry name" value="Ribosomal_eL20_dom"/>
</dbReference>
<dbReference type="NCBIfam" id="NF001981">
    <property type="entry name" value="PRK00773.1-1"/>
    <property type="match status" value="1"/>
</dbReference>
<dbReference type="Pfam" id="PF01775">
    <property type="entry name" value="Ribosomal_L18A"/>
    <property type="match status" value="1"/>
</dbReference>
<dbReference type="SUPFAM" id="SSF160374">
    <property type="entry name" value="RplX-like"/>
    <property type="match status" value="1"/>
</dbReference>
<keyword id="KW-0687">Ribonucleoprotein</keyword>
<keyword id="KW-0689">Ribosomal protein</keyword>
<keyword id="KW-0694">RNA-binding</keyword>
<keyword id="KW-0699">rRNA-binding</keyword>